<proteinExistence type="evidence at protein level"/>
<dbReference type="EMBL" id="AK006083">
    <property type="protein sequence ID" value="BAB24400.1"/>
    <property type="molecule type" value="mRNA"/>
</dbReference>
<dbReference type="EMBL" id="AK076872">
    <property type="protein sequence ID" value="BAC36515.1"/>
    <property type="molecule type" value="mRNA"/>
</dbReference>
<dbReference type="EMBL" id="AK161285">
    <property type="protein sequence ID" value="BAE36294.1"/>
    <property type="molecule type" value="mRNA"/>
</dbReference>
<dbReference type="RefSeq" id="NP_001077414.1">
    <property type="nucleotide sequence ID" value="NM_001083945.1"/>
</dbReference>
<dbReference type="PDB" id="8WZB">
    <property type="method" value="EM"/>
    <property type="resolution" value="3.28 A"/>
    <property type="chains" value="D=1-389"/>
</dbReference>
<dbReference type="PDB" id="8X2U">
    <property type="method" value="EM"/>
    <property type="resolution" value="3.57 A"/>
    <property type="chains" value="D/L=1-389"/>
</dbReference>
<dbReference type="PDBsum" id="8WZB"/>
<dbReference type="PDBsum" id="8X2U"/>
<dbReference type="EMDB" id="EMD-37949"/>
<dbReference type="EMDB" id="EMD-38020"/>
<dbReference type="SMR" id="Q9DA80"/>
<dbReference type="BioGRID" id="781945">
    <property type="interactions" value="1"/>
</dbReference>
<dbReference type="ComplexPortal" id="CPX-8161">
    <property type="entry name" value="Radial spoke complex, ciliiar variant"/>
</dbReference>
<dbReference type="ComplexPortal" id="CPX-8162">
    <property type="entry name" value="Radial spoke complex, flagellar variant"/>
</dbReference>
<dbReference type="CORUM" id="Q9DA80"/>
<dbReference type="FunCoup" id="Q9DA80">
    <property type="interactions" value="87"/>
</dbReference>
<dbReference type="STRING" id="10090.ENSMUSP00000024572"/>
<dbReference type="iPTMnet" id="Q9DA80"/>
<dbReference type="PhosphoSitePlus" id="Q9DA80"/>
<dbReference type="PaxDb" id="10090-ENSMUSP00000024572"/>
<dbReference type="ProteomicsDB" id="261005"/>
<dbReference type="Ensembl" id="ENSMUST00000024572.10">
    <property type="protein sequence ID" value="ENSMUSP00000024572.10"/>
    <property type="gene ID" value="ENSMUSG00000023806.11"/>
</dbReference>
<dbReference type="GeneID" id="100037282"/>
<dbReference type="KEGG" id="mmu:100037282"/>
<dbReference type="UCSC" id="uc008ahy.1">
    <property type="organism name" value="mouse"/>
</dbReference>
<dbReference type="AGR" id="MGI:3630308"/>
<dbReference type="CTD" id="100037282"/>
<dbReference type="MGI" id="MGI:3630308">
    <property type="gene designation" value="Rsph3b"/>
</dbReference>
<dbReference type="VEuPathDB" id="HostDB:ENSMUSG00000023806"/>
<dbReference type="eggNOG" id="ENOG502QQSZ">
    <property type="taxonomic scope" value="Eukaryota"/>
</dbReference>
<dbReference type="GeneTree" id="ENSGT00390000004172"/>
<dbReference type="HOGENOM" id="CLU_036980_4_0_1"/>
<dbReference type="InParanoid" id="Q9DA80"/>
<dbReference type="OMA" id="QDEGWFA"/>
<dbReference type="OrthoDB" id="82903at9989"/>
<dbReference type="PhylomeDB" id="Q9DA80"/>
<dbReference type="TreeFam" id="TF324184"/>
<dbReference type="BioGRID-ORCS" id="100037282">
    <property type="hits" value="5 hits in 44 CRISPR screens"/>
</dbReference>
<dbReference type="ChiTaRS" id="Rsph3b">
    <property type="organism name" value="mouse"/>
</dbReference>
<dbReference type="PRO" id="PR:Q9DA80"/>
<dbReference type="Proteomes" id="UP000000589">
    <property type="component" value="Chromosome 17"/>
</dbReference>
<dbReference type="RNAct" id="Q9DA80">
    <property type="molecule type" value="protein"/>
</dbReference>
<dbReference type="Bgee" id="ENSMUSG00000023806">
    <property type="expression patterns" value="Expressed in right kidney and 158 other cell types or tissues"/>
</dbReference>
<dbReference type="ExpressionAtlas" id="Q9DA80">
    <property type="expression patterns" value="baseline and differential"/>
</dbReference>
<dbReference type="GO" id="GO:0097729">
    <property type="term" value="C:9+2 motile cilium"/>
    <property type="evidence" value="ECO:0000314"/>
    <property type="project" value="UniProtKB"/>
</dbReference>
<dbReference type="GO" id="GO:0005930">
    <property type="term" value="C:axoneme"/>
    <property type="evidence" value="ECO:0000314"/>
    <property type="project" value="MGI"/>
</dbReference>
<dbReference type="GO" id="GO:0005576">
    <property type="term" value="C:extracellular region"/>
    <property type="evidence" value="ECO:0007669"/>
    <property type="project" value="GOC"/>
</dbReference>
<dbReference type="GO" id="GO:0001535">
    <property type="term" value="C:radial spoke head"/>
    <property type="evidence" value="ECO:0000314"/>
    <property type="project" value="UniProtKB"/>
</dbReference>
<dbReference type="GO" id="GO:0120336">
    <property type="term" value="C:radial spoke head 1"/>
    <property type="evidence" value="ECO:0000314"/>
    <property type="project" value="MGI"/>
</dbReference>
<dbReference type="GO" id="GO:0120338">
    <property type="term" value="C:radial spoke head 3"/>
    <property type="evidence" value="ECO:0000314"/>
    <property type="project" value="MGI"/>
</dbReference>
<dbReference type="GO" id="GO:0036126">
    <property type="term" value="C:sperm flagellum"/>
    <property type="evidence" value="ECO:0000305"/>
    <property type="project" value="UniProtKB"/>
</dbReference>
<dbReference type="GO" id="GO:0003351">
    <property type="term" value="P:epithelial cilium movement involved in extracellular fluid movement"/>
    <property type="evidence" value="ECO:0000305"/>
    <property type="project" value="UniProtKB"/>
</dbReference>
<dbReference type="GO" id="GO:0030317">
    <property type="term" value="P:flagellated sperm motility"/>
    <property type="evidence" value="ECO:0000305"/>
    <property type="project" value="UniProtKB"/>
</dbReference>
<dbReference type="GO" id="GO:0007618">
    <property type="term" value="P:mating"/>
    <property type="evidence" value="ECO:0000305"/>
    <property type="project" value="UniProtKB"/>
</dbReference>
<dbReference type="InterPro" id="IPR009290">
    <property type="entry name" value="Radial_spoke_3"/>
</dbReference>
<dbReference type="PANTHER" id="PTHR21648">
    <property type="entry name" value="FLAGELLAR RADIAL SPOKE PROTEIN 3"/>
    <property type="match status" value="1"/>
</dbReference>
<dbReference type="PANTHER" id="PTHR21648:SF0">
    <property type="entry name" value="RADIAL SPOKE HEAD PROTEIN 3 HOMOLOG"/>
    <property type="match status" value="1"/>
</dbReference>
<dbReference type="Pfam" id="PF06098">
    <property type="entry name" value="Radial_spoke_3"/>
    <property type="match status" value="1"/>
</dbReference>
<protein>
    <recommendedName>
        <fullName>Radial spoke head protein 3 homolog B</fullName>
    </recommendedName>
    <alternativeName>
        <fullName>A-kinase anchor protein RSPH3B</fullName>
    </alternativeName>
    <alternativeName>
        <fullName>Radial spoke head-like protein 2B</fullName>
    </alternativeName>
</protein>
<evidence type="ECO:0000250" key="1"/>
<evidence type="ECO:0000250" key="2">
    <source>
        <dbReference type="UniProtKB" id="Q86UC2"/>
    </source>
</evidence>
<evidence type="ECO:0000255" key="3"/>
<evidence type="ECO:0000256" key="4">
    <source>
        <dbReference type="SAM" id="MobiDB-lite"/>
    </source>
</evidence>
<evidence type="ECO:0000269" key="5">
    <source>
    </source>
</evidence>
<evidence type="ECO:0000269" key="6">
    <source>
    </source>
</evidence>
<evidence type="ECO:0000305" key="7"/>
<name>RSH3B_MOUSE</name>
<organism>
    <name type="scientific">Mus musculus</name>
    <name type="common">Mouse</name>
    <dbReference type="NCBI Taxonomy" id="10090"/>
    <lineage>
        <taxon>Eukaryota</taxon>
        <taxon>Metazoa</taxon>
        <taxon>Chordata</taxon>
        <taxon>Craniata</taxon>
        <taxon>Vertebrata</taxon>
        <taxon>Euteleostomi</taxon>
        <taxon>Mammalia</taxon>
        <taxon>Eutheria</taxon>
        <taxon>Euarchontoglires</taxon>
        <taxon>Glires</taxon>
        <taxon>Rodentia</taxon>
        <taxon>Myomorpha</taxon>
        <taxon>Muroidea</taxon>
        <taxon>Muridae</taxon>
        <taxon>Murinae</taxon>
        <taxon>Mus</taxon>
        <taxon>Mus</taxon>
    </lineage>
</organism>
<comment type="function">
    <text evidence="2 6">Functions as part of axonemal radial spoke complexes that play an important part in the motility of sperm and cilia (PubMed:34871179). Functions as a protein kinase A-anchoring protein that scaffolds the cAMP-dependent protein kinase holoenzyme. May serve as a point of convergence for MAPK and PKA signaling in cilia (By similarity).</text>
</comment>
<comment type="subunit">
    <text evidence="2 5 6">Component of the axonemal radial spoke 1 (RS1) and 2 (RS2) complexes, at least composed of spoke head proteins RSPH1, RSPH3B, RSPH9 and the cilia-specific component RSPH4A or sperm-specific component RSPH6A, spoke stalk proteins RSPH14, DNAJB13, DYDC1, ROPN1L and NME5, and the RS1 complex-specific anchor protein IQUB (PubMed:34871179). Interacts with IQUB (By similarity). Interacts with phosphorylated MAPK1 (By similarity). Interacts with MEK1 (By similarity). Interacts with PKA regulatory subunits PRKAR1A and PRKAR1B (By similarity). Interacts with RSPH1 (PubMed:34871179). Interacts with RSPH4A (PubMed:34871179). Interacts with RSPH6A (PubMed:34871179). Interacts with RSPH9 (PubMed:34871179). Interacts with LRRC23 (PubMed:34585727).</text>
</comment>
<comment type="subcellular location">
    <subcellularLocation>
        <location evidence="6">Cytoplasm</location>
        <location evidence="6">Cytoskeleton</location>
        <location evidence="6">Cilium axoneme</location>
    </subcellularLocation>
    <subcellularLocation>
        <location evidence="7">Cytoplasm</location>
        <location evidence="7">Cytoskeleton</location>
        <location evidence="7">Flagellum axoneme</location>
    </subcellularLocation>
</comment>
<comment type="tissue specificity">
    <text evidence="6">Expressed in ependymal cells (at protein level).</text>
</comment>
<comment type="similarity">
    <text evidence="7">Belongs to the flagellar radial spoke RSP3 family.</text>
</comment>
<keyword id="KW-0002">3D-structure</keyword>
<keyword id="KW-0966">Cell projection</keyword>
<keyword id="KW-0969">Cilium</keyword>
<keyword id="KW-0175">Coiled coil</keyword>
<keyword id="KW-0963">Cytoplasm</keyword>
<keyword id="KW-0206">Cytoskeleton</keyword>
<keyword id="KW-0282">Flagellum</keyword>
<keyword id="KW-0597">Phosphoprotein</keyword>
<keyword id="KW-1185">Reference proteome</keyword>
<sequence length="389" mass="45168">MTDRNPRTAEASGLYTYSSRPRAVACQRRRHRDSILQPVEEPMSYGNIMYDRRVIRGNTYALPTGQVPGQPDPLELQRQQQARRRALARKRAQEQLKPRTPEPVEGRKHVDIQTELYLEEIADRIVEVDMECQTDAFLDRPPTPLFIPAKTGKDVATQILGGELFDFDLEVKPMLEVLVGKTIEQSLLEVMEEEELANLRARQYAYEEIRNVELAEVQRLEEQERRHREEKERRKKQQWEIVHKRNETLQKISALIFARQYLANLLPSVFDKLRNSGFFYDPIERDIEVGFLPWLMNEVEKSMEHSMVGRTVLDMLIRDVVERRINDYEHKEAMPPGQKTNVINGPNTVTDPSVTTLHTQKPVLDRVSSQPAPSQERKPVEEGGHLMAE</sequence>
<feature type="chain" id="PRO_0000313743" description="Radial spoke head protein 3 homolog B">
    <location>
        <begin position="1"/>
        <end position="389"/>
    </location>
</feature>
<feature type="region of interest" description="Disordered" evidence="4">
    <location>
        <begin position="63"/>
        <end position="106"/>
    </location>
</feature>
<feature type="region of interest" description="Disordered" evidence="4">
    <location>
        <begin position="332"/>
        <end position="389"/>
    </location>
</feature>
<feature type="coiled-coil region" evidence="3">
    <location>
        <begin position="206"/>
        <end position="242"/>
    </location>
</feature>
<feature type="compositionally biased region" description="Basic residues" evidence="4">
    <location>
        <begin position="81"/>
        <end position="90"/>
    </location>
</feature>
<feature type="compositionally biased region" description="Basic and acidic residues" evidence="4">
    <location>
        <begin position="91"/>
        <end position="106"/>
    </location>
</feature>
<feature type="compositionally biased region" description="Polar residues" evidence="4">
    <location>
        <begin position="338"/>
        <end position="359"/>
    </location>
</feature>
<feature type="compositionally biased region" description="Basic and acidic residues" evidence="4">
    <location>
        <begin position="375"/>
        <end position="389"/>
    </location>
</feature>
<feature type="modified residue" description="Phosphothreonine; by MAPK1" evidence="1">
    <location>
        <position position="143"/>
    </location>
</feature>
<gene>
    <name type="primary">Rsph3b</name>
    <name type="synonym">Rshl2</name>
    <name type="synonym">Rshl2b</name>
</gene>
<reference key="1">
    <citation type="journal article" date="2005" name="Science">
        <title>The transcriptional landscape of the mammalian genome.</title>
        <authorList>
            <person name="Carninci P."/>
            <person name="Kasukawa T."/>
            <person name="Katayama S."/>
            <person name="Gough J."/>
            <person name="Frith M.C."/>
            <person name="Maeda N."/>
            <person name="Oyama R."/>
            <person name="Ravasi T."/>
            <person name="Lenhard B."/>
            <person name="Wells C."/>
            <person name="Kodzius R."/>
            <person name="Shimokawa K."/>
            <person name="Bajic V.B."/>
            <person name="Brenner S.E."/>
            <person name="Batalov S."/>
            <person name="Forrest A.R."/>
            <person name="Zavolan M."/>
            <person name="Davis M.J."/>
            <person name="Wilming L.G."/>
            <person name="Aidinis V."/>
            <person name="Allen J.E."/>
            <person name="Ambesi-Impiombato A."/>
            <person name="Apweiler R."/>
            <person name="Aturaliya R.N."/>
            <person name="Bailey T.L."/>
            <person name="Bansal M."/>
            <person name="Baxter L."/>
            <person name="Beisel K.W."/>
            <person name="Bersano T."/>
            <person name="Bono H."/>
            <person name="Chalk A.M."/>
            <person name="Chiu K.P."/>
            <person name="Choudhary V."/>
            <person name="Christoffels A."/>
            <person name="Clutterbuck D.R."/>
            <person name="Crowe M.L."/>
            <person name="Dalla E."/>
            <person name="Dalrymple B.P."/>
            <person name="de Bono B."/>
            <person name="Della Gatta G."/>
            <person name="di Bernardo D."/>
            <person name="Down T."/>
            <person name="Engstrom P."/>
            <person name="Fagiolini M."/>
            <person name="Faulkner G."/>
            <person name="Fletcher C.F."/>
            <person name="Fukushima T."/>
            <person name="Furuno M."/>
            <person name="Futaki S."/>
            <person name="Gariboldi M."/>
            <person name="Georgii-Hemming P."/>
            <person name="Gingeras T.R."/>
            <person name="Gojobori T."/>
            <person name="Green R.E."/>
            <person name="Gustincich S."/>
            <person name="Harbers M."/>
            <person name="Hayashi Y."/>
            <person name="Hensch T.K."/>
            <person name="Hirokawa N."/>
            <person name="Hill D."/>
            <person name="Huminiecki L."/>
            <person name="Iacono M."/>
            <person name="Ikeo K."/>
            <person name="Iwama A."/>
            <person name="Ishikawa T."/>
            <person name="Jakt M."/>
            <person name="Kanapin A."/>
            <person name="Katoh M."/>
            <person name="Kawasawa Y."/>
            <person name="Kelso J."/>
            <person name="Kitamura H."/>
            <person name="Kitano H."/>
            <person name="Kollias G."/>
            <person name="Krishnan S.P."/>
            <person name="Kruger A."/>
            <person name="Kummerfeld S.K."/>
            <person name="Kurochkin I.V."/>
            <person name="Lareau L.F."/>
            <person name="Lazarevic D."/>
            <person name="Lipovich L."/>
            <person name="Liu J."/>
            <person name="Liuni S."/>
            <person name="McWilliam S."/>
            <person name="Madan Babu M."/>
            <person name="Madera M."/>
            <person name="Marchionni L."/>
            <person name="Matsuda H."/>
            <person name="Matsuzawa S."/>
            <person name="Miki H."/>
            <person name="Mignone F."/>
            <person name="Miyake S."/>
            <person name="Morris K."/>
            <person name="Mottagui-Tabar S."/>
            <person name="Mulder N."/>
            <person name="Nakano N."/>
            <person name="Nakauchi H."/>
            <person name="Ng P."/>
            <person name="Nilsson R."/>
            <person name="Nishiguchi S."/>
            <person name="Nishikawa S."/>
            <person name="Nori F."/>
            <person name="Ohara O."/>
            <person name="Okazaki Y."/>
            <person name="Orlando V."/>
            <person name="Pang K.C."/>
            <person name="Pavan W.J."/>
            <person name="Pavesi G."/>
            <person name="Pesole G."/>
            <person name="Petrovsky N."/>
            <person name="Piazza S."/>
            <person name="Reed J."/>
            <person name="Reid J.F."/>
            <person name="Ring B.Z."/>
            <person name="Ringwald M."/>
            <person name="Rost B."/>
            <person name="Ruan Y."/>
            <person name="Salzberg S.L."/>
            <person name="Sandelin A."/>
            <person name="Schneider C."/>
            <person name="Schoenbach C."/>
            <person name="Sekiguchi K."/>
            <person name="Semple C.A."/>
            <person name="Seno S."/>
            <person name="Sessa L."/>
            <person name="Sheng Y."/>
            <person name="Shibata Y."/>
            <person name="Shimada H."/>
            <person name="Shimada K."/>
            <person name="Silva D."/>
            <person name="Sinclair B."/>
            <person name="Sperling S."/>
            <person name="Stupka E."/>
            <person name="Sugiura K."/>
            <person name="Sultana R."/>
            <person name="Takenaka Y."/>
            <person name="Taki K."/>
            <person name="Tammoja K."/>
            <person name="Tan S.L."/>
            <person name="Tang S."/>
            <person name="Taylor M.S."/>
            <person name="Tegner J."/>
            <person name="Teichmann S.A."/>
            <person name="Ueda H.R."/>
            <person name="van Nimwegen E."/>
            <person name="Verardo R."/>
            <person name="Wei C.L."/>
            <person name="Yagi K."/>
            <person name="Yamanishi H."/>
            <person name="Zabarovsky E."/>
            <person name="Zhu S."/>
            <person name="Zimmer A."/>
            <person name="Hide W."/>
            <person name="Bult C."/>
            <person name="Grimmond S.M."/>
            <person name="Teasdale R.D."/>
            <person name="Liu E.T."/>
            <person name="Brusic V."/>
            <person name="Quackenbush J."/>
            <person name="Wahlestedt C."/>
            <person name="Mattick J.S."/>
            <person name="Hume D.A."/>
            <person name="Kai C."/>
            <person name="Sasaki D."/>
            <person name="Tomaru Y."/>
            <person name="Fukuda S."/>
            <person name="Kanamori-Katayama M."/>
            <person name="Suzuki M."/>
            <person name="Aoki J."/>
            <person name="Arakawa T."/>
            <person name="Iida J."/>
            <person name="Imamura K."/>
            <person name="Itoh M."/>
            <person name="Kato T."/>
            <person name="Kawaji H."/>
            <person name="Kawagashira N."/>
            <person name="Kawashima T."/>
            <person name="Kojima M."/>
            <person name="Kondo S."/>
            <person name="Konno H."/>
            <person name="Nakano K."/>
            <person name="Ninomiya N."/>
            <person name="Nishio T."/>
            <person name="Okada M."/>
            <person name="Plessy C."/>
            <person name="Shibata K."/>
            <person name="Shiraki T."/>
            <person name="Suzuki S."/>
            <person name="Tagami M."/>
            <person name="Waki K."/>
            <person name="Watahiki A."/>
            <person name="Okamura-Oho Y."/>
            <person name="Suzuki H."/>
            <person name="Kawai J."/>
            <person name="Hayashizaki Y."/>
        </authorList>
    </citation>
    <scope>NUCLEOTIDE SEQUENCE [LARGE SCALE MRNA]</scope>
    <source>
        <strain>C57BL/6J</strain>
        <tissue>Testis</tissue>
    </source>
</reference>
<reference key="2">
    <citation type="journal article" date="2021" name="Proc. Natl. Acad. Sci. U.S.A.">
        <title>Distinct architecture and composition of mouse axonemal radial spoke head revealed by cryo-EM.</title>
        <authorList>
            <person name="Zheng W."/>
            <person name="Li F."/>
            <person name="Ding Z."/>
            <person name="Liu H."/>
            <person name="Zhu L."/>
            <person name="Xu C."/>
            <person name="Li J."/>
            <person name="Gao Q."/>
            <person name="Wang Y."/>
            <person name="Fu Z."/>
            <person name="Peng C."/>
            <person name="Yan X."/>
            <person name="Zhu X."/>
            <person name="Cong Y."/>
        </authorList>
    </citation>
    <scope>FUNCTION</scope>
    <scope>IDENTIFICATION IN RADIAL SPOKE COMPLEX 1 AND RADIAL SPOKE COMPLEX 2</scope>
    <scope>INTERACTION WITH RSPH1; RSPH4A; RSPH6A AND RSPH9</scope>
    <scope>IDENTIFICATION BY MASS SPECTROMETRY</scope>
    <scope>SUBCELLULAR LOCATION</scope>
    <scope>TISSUE SPECIFICITY</scope>
</reference>
<reference key="3">
    <citation type="journal article" date="2021" name="J. Cell Sci.">
        <title>LRRC23 is a conserved component of the radial spoke that is necessary for sperm motility and male fertility in mice.</title>
        <authorList>
            <person name="Zhang X."/>
            <person name="Sun J."/>
            <person name="Lu Y."/>
            <person name="Zhang J."/>
            <person name="Shimada K."/>
            <person name="Noda T."/>
            <person name="Zhao S."/>
            <person name="Koyano T."/>
            <person name="Matsuyama M."/>
            <person name="Zhou S."/>
            <person name="Wu J."/>
            <person name="Ikawa M."/>
            <person name="Liu M."/>
        </authorList>
    </citation>
    <scope>INTERACTION WITH LRRC23</scope>
</reference>
<accession>Q9DA80</accession>